<keyword id="KW-0227">DNA damage</keyword>
<keyword id="KW-0234">DNA repair</keyword>
<keyword id="KW-0255">Endonuclease</keyword>
<keyword id="KW-0378">Hydrolase</keyword>
<keyword id="KW-0479">Metal-binding</keyword>
<keyword id="KW-0540">Nuclease</keyword>
<keyword id="KW-0862">Zinc</keyword>
<dbReference type="EC" id="3.1.21.2" evidence="1"/>
<dbReference type="EMBL" id="CP000764">
    <property type="protein sequence ID" value="ABS23239.1"/>
    <property type="molecule type" value="Genomic_DNA"/>
</dbReference>
<dbReference type="RefSeq" id="WP_012095476.1">
    <property type="nucleotide sequence ID" value="NC_009674.1"/>
</dbReference>
<dbReference type="SMR" id="A7GSY1"/>
<dbReference type="STRING" id="315749.Bcer98_3012"/>
<dbReference type="GeneID" id="33898260"/>
<dbReference type="KEGG" id="bcy:Bcer98_3012"/>
<dbReference type="eggNOG" id="COG0648">
    <property type="taxonomic scope" value="Bacteria"/>
</dbReference>
<dbReference type="HOGENOM" id="CLU_025885_4_1_9"/>
<dbReference type="OrthoDB" id="9805666at2"/>
<dbReference type="Proteomes" id="UP000002300">
    <property type="component" value="Chromosome"/>
</dbReference>
<dbReference type="GO" id="GO:0008833">
    <property type="term" value="F:deoxyribonuclease IV (phage-T4-induced) activity"/>
    <property type="evidence" value="ECO:0007669"/>
    <property type="project" value="UniProtKB-UniRule"/>
</dbReference>
<dbReference type="GO" id="GO:0003677">
    <property type="term" value="F:DNA binding"/>
    <property type="evidence" value="ECO:0007669"/>
    <property type="project" value="InterPro"/>
</dbReference>
<dbReference type="GO" id="GO:0003906">
    <property type="term" value="F:DNA-(apurinic or apyrimidinic site) endonuclease activity"/>
    <property type="evidence" value="ECO:0007669"/>
    <property type="project" value="TreeGrafter"/>
</dbReference>
<dbReference type="GO" id="GO:0008081">
    <property type="term" value="F:phosphoric diester hydrolase activity"/>
    <property type="evidence" value="ECO:0007669"/>
    <property type="project" value="TreeGrafter"/>
</dbReference>
<dbReference type="GO" id="GO:0008270">
    <property type="term" value="F:zinc ion binding"/>
    <property type="evidence" value="ECO:0007669"/>
    <property type="project" value="UniProtKB-UniRule"/>
</dbReference>
<dbReference type="GO" id="GO:0006284">
    <property type="term" value="P:base-excision repair"/>
    <property type="evidence" value="ECO:0007669"/>
    <property type="project" value="TreeGrafter"/>
</dbReference>
<dbReference type="CDD" id="cd00019">
    <property type="entry name" value="AP2Ec"/>
    <property type="match status" value="1"/>
</dbReference>
<dbReference type="FunFam" id="3.20.20.150:FF:000001">
    <property type="entry name" value="Probable endonuclease 4"/>
    <property type="match status" value="1"/>
</dbReference>
<dbReference type="Gene3D" id="3.20.20.150">
    <property type="entry name" value="Divalent-metal-dependent TIM barrel enzymes"/>
    <property type="match status" value="1"/>
</dbReference>
<dbReference type="HAMAP" id="MF_00152">
    <property type="entry name" value="Nfo"/>
    <property type="match status" value="1"/>
</dbReference>
<dbReference type="InterPro" id="IPR001719">
    <property type="entry name" value="AP_endonuc_2"/>
</dbReference>
<dbReference type="InterPro" id="IPR018246">
    <property type="entry name" value="AP_endonuc_F2_Zn_BS"/>
</dbReference>
<dbReference type="InterPro" id="IPR036237">
    <property type="entry name" value="Xyl_isomerase-like_sf"/>
</dbReference>
<dbReference type="InterPro" id="IPR013022">
    <property type="entry name" value="Xyl_isomerase-like_TIM-brl"/>
</dbReference>
<dbReference type="NCBIfam" id="TIGR00587">
    <property type="entry name" value="nfo"/>
    <property type="match status" value="1"/>
</dbReference>
<dbReference type="NCBIfam" id="NF002196">
    <property type="entry name" value="PRK01060.1-1"/>
    <property type="match status" value="1"/>
</dbReference>
<dbReference type="PANTHER" id="PTHR21445:SF0">
    <property type="entry name" value="APURINIC-APYRIMIDINIC ENDONUCLEASE"/>
    <property type="match status" value="1"/>
</dbReference>
<dbReference type="PANTHER" id="PTHR21445">
    <property type="entry name" value="ENDONUCLEASE IV ENDODEOXYRIBONUCLEASE IV"/>
    <property type="match status" value="1"/>
</dbReference>
<dbReference type="Pfam" id="PF01261">
    <property type="entry name" value="AP_endonuc_2"/>
    <property type="match status" value="1"/>
</dbReference>
<dbReference type="SMART" id="SM00518">
    <property type="entry name" value="AP2Ec"/>
    <property type="match status" value="1"/>
</dbReference>
<dbReference type="SUPFAM" id="SSF51658">
    <property type="entry name" value="Xylose isomerase-like"/>
    <property type="match status" value="1"/>
</dbReference>
<dbReference type="PROSITE" id="PS00729">
    <property type="entry name" value="AP_NUCLEASE_F2_1"/>
    <property type="match status" value="1"/>
</dbReference>
<dbReference type="PROSITE" id="PS00730">
    <property type="entry name" value="AP_NUCLEASE_F2_2"/>
    <property type="match status" value="1"/>
</dbReference>
<dbReference type="PROSITE" id="PS00731">
    <property type="entry name" value="AP_NUCLEASE_F2_3"/>
    <property type="match status" value="1"/>
</dbReference>
<dbReference type="PROSITE" id="PS51432">
    <property type="entry name" value="AP_NUCLEASE_F2_4"/>
    <property type="match status" value="1"/>
</dbReference>
<proteinExistence type="inferred from homology"/>
<protein>
    <recommendedName>
        <fullName evidence="1">Probable endonuclease 4</fullName>
        <ecNumber evidence="1">3.1.21.2</ecNumber>
    </recommendedName>
    <alternativeName>
        <fullName evidence="1">Endodeoxyribonuclease IV</fullName>
    </alternativeName>
    <alternativeName>
        <fullName evidence="1">Endonuclease IV</fullName>
    </alternativeName>
</protein>
<feature type="chain" id="PRO_1000076800" description="Probable endonuclease 4">
    <location>
        <begin position="1"/>
        <end position="298"/>
    </location>
</feature>
<feature type="binding site" evidence="1">
    <location>
        <position position="69"/>
    </location>
    <ligand>
        <name>Zn(2+)</name>
        <dbReference type="ChEBI" id="CHEBI:29105"/>
        <label>1</label>
    </ligand>
</feature>
<feature type="binding site" evidence="1">
    <location>
        <position position="111"/>
    </location>
    <ligand>
        <name>Zn(2+)</name>
        <dbReference type="ChEBI" id="CHEBI:29105"/>
        <label>1</label>
    </ligand>
</feature>
<feature type="binding site" evidence="1">
    <location>
        <position position="146"/>
    </location>
    <ligand>
        <name>Zn(2+)</name>
        <dbReference type="ChEBI" id="CHEBI:29105"/>
        <label>1</label>
    </ligand>
</feature>
<feature type="binding site" evidence="1">
    <location>
        <position position="146"/>
    </location>
    <ligand>
        <name>Zn(2+)</name>
        <dbReference type="ChEBI" id="CHEBI:29105"/>
        <label>2</label>
    </ligand>
</feature>
<feature type="binding site" evidence="1">
    <location>
        <position position="180"/>
    </location>
    <ligand>
        <name>Zn(2+)</name>
        <dbReference type="ChEBI" id="CHEBI:29105"/>
        <label>2</label>
    </ligand>
</feature>
<feature type="binding site" evidence="1">
    <location>
        <position position="183"/>
    </location>
    <ligand>
        <name>Zn(2+)</name>
        <dbReference type="ChEBI" id="CHEBI:29105"/>
        <label>3</label>
    </ligand>
</feature>
<feature type="binding site" evidence="1">
    <location>
        <position position="215"/>
    </location>
    <ligand>
        <name>Zn(2+)</name>
        <dbReference type="ChEBI" id="CHEBI:29105"/>
        <label>2</label>
    </ligand>
</feature>
<feature type="binding site" evidence="1">
    <location>
        <position position="228"/>
    </location>
    <ligand>
        <name>Zn(2+)</name>
        <dbReference type="ChEBI" id="CHEBI:29105"/>
        <label>3</label>
    </ligand>
</feature>
<feature type="binding site" evidence="1">
    <location>
        <position position="230"/>
    </location>
    <ligand>
        <name>Zn(2+)</name>
        <dbReference type="ChEBI" id="CHEBI:29105"/>
        <label>3</label>
    </ligand>
</feature>
<feature type="binding site" evidence="1">
    <location>
        <position position="260"/>
    </location>
    <ligand>
        <name>Zn(2+)</name>
        <dbReference type="ChEBI" id="CHEBI:29105"/>
        <label>2</label>
    </ligand>
</feature>
<evidence type="ECO:0000255" key="1">
    <source>
        <dbReference type="HAMAP-Rule" id="MF_00152"/>
    </source>
</evidence>
<gene>
    <name evidence="1" type="primary">nfo</name>
    <name type="ordered locus">Bcer98_3012</name>
</gene>
<organism>
    <name type="scientific">Bacillus cytotoxicus (strain DSM 22905 / CIP 110041 / 391-98 / NVH 391-98)</name>
    <dbReference type="NCBI Taxonomy" id="315749"/>
    <lineage>
        <taxon>Bacteria</taxon>
        <taxon>Bacillati</taxon>
        <taxon>Bacillota</taxon>
        <taxon>Bacilli</taxon>
        <taxon>Bacillales</taxon>
        <taxon>Bacillaceae</taxon>
        <taxon>Bacillus</taxon>
        <taxon>Bacillus cereus group</taxon>
    </lineage>
</organism>
<comment type="function">
    <text evidence="1">Endonuclease IV plays a role in DNA repair. It cleaves phosphodiester bonds at apurinic or apyrimidinic (AP) sites, generating a 3'-hydroxyl group and a 5'-terminal sugar phosphate.</text>
</comment>
<comment type="catalytic activity">
    <reaction evidence="1">
        <text>Endonucleolytic cleavage to 5'-phosphooligonucleotide end-products.</text>
        <dbReference type="EC" id="3.1.21.2"/>
    </reaction>
</comment>
<comment type="cofactor">
    <cofactor evidence="1">
        <name>Zn(2+)</name>
        <dbReference type="ChEBI" id="CHEBI:29105"/>
    </cofactor>
    <text evidence="1">Binds 3 Zn(2+) ions.</text>
</comment>
<comment type="similarity">
    <text evidence="1">Belongs to the AP endonuclease 2 family.</text>
</comment>
<accession>A7GSY1</accession>
<reference key="1">
    <citation type="journal article" date="2008" name="Chem. Biol. Interact.">
        <title>Extending the Bacillus cereus group genomics to putative food-borne pathogens of different toxicity.</title>
        <authorList>
            <person name="Lapidus A."/>
            <person name="Goltsman E."/>
            <person name="Auger S."/>
            <person name="Galleron N."/>
            <person name="Segurens B."/>
            <person name="Dossat C."/>
            <person name="Land M.L."/>
            <person name="Broussolle V."/>
            <person name="Brillard J."/>
            <person name="Guinebretiere M.-H."/>
            <person name="Sanchis V."/>
            <person name="Nguen-the C."/>
            <person name="Lereclus D."/>
            <person name="Richardson P."/>
            <person name="Wincker P."/>
            <person name="Weissenbach J."/>
            <person name="Ehrlich S.D."/>
            <person name="Sorokin A."/>
        </authorList>
    </citation>
    <scope>NUCLEOTIDE SEQUENCE [LARGE SCALE GENOMIC DNA]</scope>
    <source>
        <strain>DSM 22905 / CIP 110041 / 391-98 / NVH 391-98</strain>
    </source>
</reference>
<sequence>MLKIGSHVSMSGKKMLLAASEEAVSYGATTFMIYTGAPQNTRRKPIEELNIEAGRKHMEEHGIKEIIVHAPYIINIGNTTKPETFQLGVDFLRMEIERTEALGVAKQIVLHPGAHVGAGADAGIAQIIKGLNEVLTPEQTVNIALETMAGKGTECGRSFEEIARIIDGVTYNEKLSVCFDTCHTHDAGYDIANDFDGVLNEFDKIVGIDRLQVLHVNDSKNVRGAAKDRHENIGFGHIGYKALHDIVHHPQLEHIPKILETPYVGEEKKDKKPPYKFEIEMLKNGTFDEGLLEKIKGQ</sequence>
<name>END4_BACCN</name>